<dbReference type="EC" id="4.1.1.49" evidence="1"/>
<dbReference type="EMBL" id="CU928145">
    <property type="protein sequence ID" value="CAV00164.1"/>
    <property type="molecule type" value="Genomic_DNA"/>
</dbReference>
<dbReference type="RefSeq" id="WP_001265681.1">
    <property type="nucleotide sequence ID" value="NZ_CP028304.1"/>
</dbReference>
<dbReference type="SMR" id="B7L4T1"/>
<dbReference type="KEGG" id="eck:EC55989_3809"/>
<dbReference type="HOGENOM" id="CLU_018247_0_1_6"/>
<dbReference type="UniPathway" id="UPA00138"/>
<dbReference type="Proteomes" id="UP000000746">
    <property type="component" value="Chromosome"/>
</dbReference>
<dbReference type="GO" id="GO:0005829">
    <property type="term" value="C:cytosol"/>
    <property type="evidence" value="ECO:0007669"/>
    <property type="project" value="TreeGrafter"/>
</dbReference>
<dbReference type="GO" id="GO:0005524">
    <property type="term" value="F:ATP binding"/>
    <property type="evidence" value="ECO:0007669"/>
    <property type="project" value="UniProtKB-UniRule"/>
</dbReference>
<dbReference type="GO" id="GO:0046872">
    <property type="term" value="F:metal ion binding"/>
    <property type="evidence" value="ECO:0007669"/>
    <property type="project" value="UniProtKB-KW"/>
</dbReference>
<dbReference type="GO" id="GO:0004612">
    <property type="term" value="F:phosphoenolpyruvate carboxykinase (ATP) activity"/>
    <property type="evidence" value="ECO:0007669"/>
    <property type="project" value="UniProtKB-UniRule"/>
</dbReference>
<dbReference type="GO" id="GO:0006094">
    <property type="term" value="P:gluconeogenesis"/>
    <property type="evidence" value="ECO:0007669"/>
    <property type="project" value="UniProtKB-UniRule"/>
</dbReference>
<dbReference type="CDD" id="cd00484">
    <property type="entry name" value="PEPCK_ATP"/>
    <property type="match status" value="1"/>
</dbReference>
<dbReference type="FunFam" id="2.170.8.10:FF:000001">
    <property type="entry name" value="Phosphoenolpyruvate carboxykinase (ATP)"/>
    <property type="match status" value="1"/>
</dbReference>
<dbReference type="FunFam" id="3.40.449.10:FF:000001">
    <property type="entry name" value="Phosphoenolpyruvate carboxykinase (ATP)"/>
    <property type="match status" value="1"/>
</dbReference>
<dbReference type="Gene3D" id="3.90.228.20">
    <property type="match status" value="1"/>
</dbReference>
<dbReference type="Gene3D" id="3.40.449.10">
    <property type="entry name" value="Phosphoenolpyruvate Carboxykinase, domain 1"/>
    <property type="match status" value="1"/>
</dbReference>
<dbReference type="Gene3D" id="2.170.8.10">
    <property type="entry name" value="Phosphoenolpyruvate Carboxykinase, domain 2"/>
    <property type="match status" value="1"/>
</dbReference>
<dbReference type="HAMAP" id="MF_00453">
    <property type="entry name" value="PEPCK_ATP"/>
    <property type="match status" value="1"/>
</dbReference>
<dbReference type="InterPro" id="IPR001272">
    <property type="entry name" value="PEP_carboxykinase_ATP"/>
</dbReference>
<dbReference type="InterPro" id="IPR013035">
    <property type="entry name" value="PEP_carboxykinase_C"/>
</dbReference>
<dbReference type="InterPro" id="IPR008210">
    <property type="entry name" value="PEP_carboxykinase_N"/>
</dbReference>
<dbReference type="InterPro" id="IPR015994">
    <property type="entry name" value="PEPCK_ATP_CS"/>
</dbReference>
<dbReference type="NCBIfam" id="TIGR00224">
    <property type="entry name" value="pckA"/>
    <property type="match status" value="1"/>
</dbReference>
<dbReference type="NCBIfam" id="NF006819">
    <property type="entry name" value="PRK09344.1-1"/>
    <property type="match status" value="1"/>
</dbReference>
<dbReference type="NCBIfam" id="NF006820">
    <property type="entry name" value="PRK09344.1-2"/>
    <property type="match status" value="1"/>
</dbReference>
<dbReference type="NCBIfam" id="NF006821">
    <property type="entry name" value="PRK09344.1-3"/>
    <property type="match status" value="1"/>
</dbReference>
<dbReference type="PANTHER" id="PTHR30031:SF0">
    <property type="entry name" value="PHOSPHOENOLPYRUVATE CARBOXYKINASE (ATP)"/>
    <property type="match status" value="1"/>
</dbReference>
<dbReference type="PANTHER" id="PTHR30031">
    <property type="entry name" value="PHOSPHOENOLPYRUVATE CARBOXYKINASE ATP"/>
    <property type="match status" value="1"/>
</dbReference>
<dbReference type="Pfam" id="PF01293">
    <property type="entry name" value="PEPCK_ATP"/>
    <property type="match status" value="1"/>
</dbReference>
<dbReference type="PIRSF" id="PIRSF006294">
    <property type="entry name" value="PEP_crbxkin"/>
    <property type="match status" value="1"/>
</dbReference>
<dbReference type="SUPFAM" id="SSF68923">
    <property type="entry name" value="PEP carboxykinase N-terminal domain"/>
    <property type="match status" value="1"/>
</dbReference>
<dbReference type="SUPFAM" id="SSF53795">
    <property type="entry name" value="PEP carboxykinase-like"/>
    <property type="match status" value="1"/>
</dbReference>
<dbReference type="PROSITE" id="PS00532">
    <property type="entry name" value="PEPCK_ATP"/>
    <property type="match status" value="1"/>
</dbReference>
<evidence type="ECO:0000255" key="1">
    <source>
        <dbReference type="HAMAP-Rule" id="MF_00453"/>
    </source>
</evidence>
<reference key="1">
    <citation type="journal article" date="2009" name="PLoS Genet.">
        <title>Organised genome dynamics in the Escherichia coli species results in highly diverse adaptive paths.</title>
        <authorList>
            <person name="Touchon M."/>
            <person name="Hoede C."/>
            <person name="Tenaillon O."/>
            <person name="Barbe V."/>
            <person name="Baeriswyl S."/>
            <person name="Bidet P."/>
            <person name="Bingen E."/>
            <person name="Bonacorsi S."/>
            <person name="Bouchier C."/>
            <person name="Bouvet O."/>
            <person name="Calteau A."/>
            <person name="Chiapello H."/>
            <person name="Clermont O."/>
            <person name="Cruveiller S."/>
            <person name="Danchin A."/>
            <person name="Diard M."/>
            <person name="Dossat C."/>
            <person name="Karoui M.E."/>
            <person name="Frapy E."/>
            <person name="Garry L."/>
            <person name="Ghigo J.M."/>
            <person name="Gilles A.M."/>
            <person name="Johnson J."/>
            <person name="Le Bouguenec C."/>
            <person name="Lescat M."/>
            <person name="Mangenot S."/>
            <person name="Martinez-Jehanne V."/>
            <person name="Matic I."/>
            <person name="Nassif X."/>
            <person name="Oztas S."/>
            <person name="Petit M.A."/>
            <person name="Pichon C."/>
            <person name="Rouy Z."/>
            <person name="Ruf C.S."/>
            <person name="Schneider D."/>
            <person name="Tourret J."/>
            <person name="Vacherie B."/>
            <person name="Vallenet D."/>
            <person name="Medigue C."/>
            <person name="Rocha E.P.C."/>
            <person name="Denamur E."/>
        </authorList>
    </citation>
    <scope>NUCLEOTIDE SEQUENCE [LARGE SCALE GENOMIC DNA]</scope>
    <source>
        <strain>55989 / EAEC</strain>
    </source>
</reference>
<organism>
    <name type="scientific">Escherichia coli (strain 55989 / EAEC)</name>
    <dbReference type="NCBI Taxonomy" id="585055"/>
    <lineage>
        <taxon>Bacteria</taxon>
        <taxon>Pseudomonadati</taxon>
        <taxon>Pseudomonadota</taxon>
        <taxon>Gammaproteobacteria</taxon>
        <taxon>Enterobacterales</taxon>
        <taxon>Enterobacteriaceae</taxon>
        <taxon>Escherichia</taxon>
    </lineage>
</organism>
<sequence length="540" mass="59643">MRVNNGLTPQELEAYGISDVHDIVYNPSYDLLYQEELDPSLTGYERGVLTNLGAVAVDTGIFTGRSPKDKYIVRDDTTRDTFWWADKGKGKNDNKPLSPETWQHLKGLVTRQLSGKRLFVVDAFCGANPDTRLSVRFITEVAWQAHFVKNMFIRPSDEELAGFKPDFIVMNGAKCTNPQWKEQGLNSENFVAFNLTERMQLIGGTWYGGEMKKGMFSMMNYLLPLKGIASMHCSANVGEKGDVAVFFGLSGTGKTTLSTDPKRRLIGDDEHGWDDDGVFNFEGGCYAKTIKLSKEAEPEIYNAIRRDALLENVTVREDGTIDFDDGSKTENTRVSYPIYHIDNIVKPVSKAGHATKVIFLTADAFGVLPPVSRLTADQTQYHFLSGFTAKLAGTERGITEPTPTFSACFGAAFLSLHPTQYAEVLVKRMQAAGAQAYLVNTGWNGTGKRISIKDTRAIIDAILNGSLDNAETFTLPMFNLAIPTELPGVDTKILDPRNTYASPEQWQEKAETLAKLFIDNFDKYTDTPAGAALVAAGPKL</sequence>
<feature type="chain" id="PRO_1000192313" description="Phosphoenolpyruvate carboxykinase (ATP)">
    <location>
        <begin position="1"/>
        <end position="540"/>
    </location>
</feature>
<feature type="binding site" evidence="1">
    <location>
        <position position="65"/>
    </location>
    <ligand>
        <name>substrate</name>
    </ligand>
</feature>
<feature type="binding site" evidence="1">
    <location>
        <position position="207"/>
    </location>
    <ligand>
        <name>substrate</name>
    </ligand>
</feature>
<feature type="binding site" evidence="1">
    <location>
        <position position="213"/>
    </location>
    <ligand>
        <name>ATP</name>
        <dbReference type="ChEBI" id="CHEBI:30616"/>
    </ligand>
</feature>
<feature type="binding site" evidence="1">
    <location>
        <position position="213"/>
    </location>
    <ligand>
        <name>Mn(2+)</name>
        <dbReference type="ChEBI" id="CHEBI:29035"/>
    </ligand>
</feature>
<feature type="binding site" evidence="1">
    <location>
        <position position="213"/>
    </location>
    <ligand>
        <name>substrate</name>
    </ligand>
</feature>
<feature type="binding site" evidence="1">
    <location>
        <position position="232"/>
    </location>
    <ligand>
        <name>ATP</name>
        <dbReference type="ChEBI" id="CHEBI:30616"/>
    </ligand>
</feature>
<feature type="binding site" evidence="1">
    <location>
        <position position="232"/>
    </location>
    <ligand>
        <name>Mn(2+)</name>
        <dbReference type="ChEBI" id="CHEBI:29035"/>
    </ligand>
</feature>
<feature type="binding site" evidence="1">
    <location>
        <begin position="248"/>
        <end position="256"/>
    </location>
    <ligand>
        <name>ATP</name>
        <dbReference type="ChEBI" id="CHEBI:30616"/>
    </ligand>
</feature>
<feature type="binding site" evidence="1">
    <location>
        <position position="269"/>
    </location>
    <ligand>
        <name>Mn(2+)</name>
        <dbReference type="ChEBI" id="CHEBI:29035"/>
    </ligand>
</feature>
<feature type="binding site" evidence="1">
    <location>
        <position position="297"/>
    </location>
    <ligand>
        <name>ATP</name>
        <dbReference type="ChEBI" id="CHEBI:30616"/>
    </ligand>
</feature>
<feature type="binding site" evidence="1">
    <location>
        <position position="333"/>
    </location>
    <ligand>
        <name>ATP</name>
        <dbReference type="ChEBI" id="CHEBI:30616"/>
    </ligand>
</feature>
<feature type="binding site" evidence="1">
    <location>
        <position position="333"/>
    </location>
    <ligand>
        <name>substrate</name>
    </ligand>
</feature>
<feature type="binding site" evidence="1">
    <location>
        <begin position="449"/>
        <end position="450"/>
    </location>
    <ligand>
        <name>ATP</name>
        <dbReference type="ChEBI" id="CHEBI:30616"/>
    </ligand>
</feature>
<feature type="binding site" evidence="1">
    <location>
        <position position="455"/>
    </location>
    <ligand>
        <name>ATP</name>
        <dbReference type="ChEBI" id="CHEBI:30616"/>
    </ligand>
</feature>
<feature type="modified residue" description="N6-acetyllysine" evidence="1">
    <location>
        <position position="87"/>
    </location>
</feature>
<feature type="modified residue" description="N6-acetyllysine" evidence="1">
    <location>
        <position position="523"/>
    </location>
</feature>
<proteinExistence type="inferred from homology"/>
<comment type="function">
    <text evidence="1">Involved in the gluconeogenesis. Catalyzes the conversion of oxaloacetate (OAA) to phosphoenolpyruvate (PEP) through direct phosphoryl transfer between the nucleoside triphosphate and OAA.</text>
</comment>
<comment type="catalytic activity">
    <reaction evidence="1">
        <text>oxaloacetate + ATP = phosphoenolpyruvate + ADP + CO2</text>
        <dbReference type="Rhea" id="RHEA:18617"/>
        <dbReference type="ChEBI" id="CHEBI:16452"/>
        <dbReference type="ChEBI" id="CHEBI:16526"/>
        <dbReference type="ChEBI" id="CHEBI:30616"/>
        <dbReference type="ChEBI" id="CHEBI:58702"/>
        <dbReference type="ChEBI" id="CHEBI:456216"/>
        <dbReference type="EC" id="4.1.1.49"/>
    </reaction>
</comment>
<comment type="cofactor">
    <cofactor evidence="1">
        <name>Mn(2+)</name>
        <dbReference type="ChEBI" id="CHEBI:29035"/>
    </cofactor>
    <text evidence="1">Binds 1 Mn(2+) ion per subunit.</text>
</comment>
<comment type="pathway">
    <text evidence="1">Carbohydrate biosynthesis; gluconeogenesis.</text>
</comment>
<comment type="subunit">
    <text evidence="1">Monomer.</text>
</comment>
<comment type="subcellular location">
    <subcellularLocation>
        <location evidence="1">Cytoplasm</location>
    </subcellularLocation>
</comment>
<comment type="similarity">
    <text evidence="1">Belongs to the phosphoenolpyruvate carboxykinase (ATP) family.</text>
</comment>
<protein>
    <recommendedName>
        <fullName evidence="1">Phosphoenolpyruvate carboxykinase (ATP)</fullName>
        <shortName evidence="1">PCK</shortName>
        <shortName evidence="1">PEP carboxykinase</shortName>
        <shortName evidence="1">PEPCK</shortName>
        <ecNumber evidence="1">4.1.1.49</ecNumber>
    </recommendedName>
</protein>
<keyword id="KW-0007">Acetylation</keyword>
<keyword id="KW-0067">ATP-binding</keyword>
<keyword id="KW-0963">Cytoplasm</keyword>
<keyword id="KW-0210">Decarboxylase</keyword>
<keyword id="KW-0312">Gluconeogenesis</keyword>
<keyword id="KW-0456">Lyase</keyword>
<keyword id="KW-0464">Manganese</keyword>
<keyword id="KW-0479">Metal-binding</keyword>
<keyword id="KW-0547">Nucleotide-binding</keyword>
<keyword id="KW-1185">Reference proteome</keyword>
<accession>B7L4T1</accession>
<name>PCKA_ECO55</name>
<gene>
    <name evidence="1" type="primary">pckA</name>
    <name type="ordered locus">EC55989_3809</name>
</gene>